<evidence type="ECO:0000255" key="1">
    <source>
        <dbReference type="HAMAP-Rule" id="MF_00444"/>
    </source>
</evidence>
<accession>Q7YJV2</accession>
<comment type="function">
    <text evidence="1">Cleaves peptides in various proteins in a process that requires ATP hydrolysis. Has a chymotrypsin-like activity. Plays a major role in the degradation of misfolded proteins.</text>
</comment>
<comment type="catalytic activity">
    <reaction evidence="1">
        <text>Hydrolysis of proteins to small peptides in the presence of ATP and magnesium. alpha-casein is the usual test substrate. In the absence of ATP, only oligopeptides shorter than five residues are hydrolyzed (such as succinyl-Leu-Tyr-|-NHMec, and Leu-Tyr-Leu-|-Tyr-Trp, in which cleavage of the -Tyr-|-Leu- and -Tyr-|-Trp bonds also occurs).</text>
        <dbReference type="EC" id="3.4.21.92"/>
    </reaction>
</comment>
<comment type="subunit">
    <text>Component of the chloroplastic Clp protease core complex.</text>
</comment>
<comment type="subcellular location">
    <subcellularLocation>
        <location evidence="1">Plastid</location>
        <location evidence="1">Chloroplast stroma</location>
    </subcellularLocation>
</comment>
<comment type="similarity">
    <text evidence="1">Belongs to the peptidase S14 family.</text>
</comment>
<protein>
    <recommendedName>
        <fullName evidence="1">ATP-dependent Clp protease proteolytic subunit</fullName>
        <ecNumber evidence="1">3.4.21.92</ecNumber>
    </recommendedName>
    <alternativeName>
        <fullName evidence="1">Endopeptidase Clp</fullName>
    </alternativeName>
</protein>
<gene>
    <name evidence="1" type="primary">clpP</name>
</gene>
<keyword id="KW-0150">Chloroplast</keyword>
<keyword id="KW-0378">Hydrolase</keyword>
<keyword id="KW-0934">Plastid</keyword>
<keyword id="KW-0645">Protease</keyword>
<keyword id="KW-0720">Serine protease</keyword>
<sequence>MPIGVPKVPFRSPGEEDAVWVDVYNRLHRERLLFLGQEVDSEISNQLVGLMVYLTIEDDTKDLYLFINSPGGWVIPGIAIYDTMQFVSPDVHTICMGLAASMGSFILVGGEITKRLAFPHARVMIHQPASSFYEAPTGEFILEAEELLKLRETLTRVYVQRTGNPLWVVSEDMERDVFMSATEAQAHGIVDLVAIENTGDSA</sequence>
<proteinExistence type="inferred from homology"/>
<feature type="chain" id="PRO_0000179735" description="ATP-dependent Clp protease proteolytic subunit">
    <location>
        <begin position="1"/>
        <end position="202"/>
    </location>
</feature>
<feature type="active site" description="Nucleophile" evidence="1">
    <location>
        <position position="101"/>
    </location>
</feature>
<feature type="active site" evidence="1">
    <location>
        <position position="126"/>
    </location>
</feature>
<organism>
    <name type="scientific">Calycanthus floridus var. glaucus</name>
    <name type="common">Eastern sweetshrub</name>
    <name type="synonym">Calycanthus fertilis var. ferax</name>
    <dbReference type="NCBI Taxonomy" id="212734"/>
    <lineage>
        <taxon>Eukaryota</taxon>
        <taxon>Viridiplantae</taxon>
        <taxon>Streptophyta</taxon>
        <taxon>Embryophyta</taxon>
        <taxon>Tracheophyta</taxon>
        <taxon>Spermatophyta</taxon>
        <taxon>Magnoliopsida</taxon>
        <taxon>Magnoliidae</taxon>
        <taxon>Laurales</taxon>
        <taxon>Calycanthaceae</taxon>
        <taxon>Calycanthus</taxon>
    </lineage>
</organism>
<reference key="1">
    <citation type="journal article" date="2003" name="Plant Syst. Evol.">
        <title>The chloroplast genome of the 'basal' angiosperm Calycanthus fertilis -- structural and phylogenetic analyses.</title>
        <authorList>
            <person name="Goremykin V."/>
            <person name="Hirsch-Ernst K.I."/>
            <person name="Woelfl S."/>
            <person name="Hellwig F.H."/>
        </authorList>
    </citation>
    <scope>NUCLEOTIDE SEQUENCE [LARGE SCALE GENOMIC DNA]</scope>
</reference>
<geneLocation type="chloroplast"/>
<name>CLPP_CALFG</name>
<dbReference type="EC" id="3.4.21.92" evidence="1"/>
<dbReference type="EMBL" id="AJ428413">
    <property type="protein sequence ID" value="CAD28745.1"/>
    <property type="molecule type" value="Genomic_DNA"/>
</dbReference>
<dbReference type="RefSeq" id="NP_862778.1">
    <property type="nucleotide sequence ID" value="NC_004993.1"/>
</dbReference>
<dbReference type="SMR" id="Q7YJV2"/>
<dbReference type="MEROPS" id="S14.002"/>
<dbReference type="GeneID" id="2597981"/>
<dbReference type="GO" id="GO:0009570">
    <property type="term" value="C:chloroplast stroma"/>
    <property type="evidence" value="ECO:0007669"/>
    <property type="project" value="UniProtKB-SubCell"/>
</dbReference>
<dbReference type="GO" id="GO:0009368">
    <property type="term" value="C:endopeptidase Clp complex"/>
    <property type="evidence" value="ECO:0007669"/>
    <property type="project" value="TreeGrafter"/>
</dbReference>
<dbReference type="GO" id="GO:0004176">
    <property type="term" value="F:ATP-dependent peptidase activity"/>
    <property type="evidence" value="ECO:0007669"/>
    <property type="project" value="InterPro"/>
</dbReference>
<dbReference type="GO" id="GO:0051117">
    <property type="term" value="F:ATPase binding"/>
    <property type="evidence" value="ECO:0007669"/>
    <property type="project" value="TreeGrafter"/>
</dbReference>
<dbReference type="GO" id="GO:0004252">
    <property type="term" value="F:serine-type endopeptidase activity"/>
    <property type="evidence" value="ECO:0007669"/>
    <property type="project" value="UniProtKB-UniRule"/>
</dbReference>
<dbReference type="GO" id="GO:0006515">
    <property type="term" value="P:protein quality control for misfolded or incompletely synthesized proteins"/>
    <property type="evidence" value="ECO:0007669"/>
    <property type="project" value="TreeGrafter"/>
</dbReference>
<dbReference type="CDD" id="cd07017">
    <property type="entry name" value="S14_ClpP_2"/>
    <property type="match status" value="1"/>
</dbReference>
<dbReference type="FunFam" id="3.90.226.10:FF:000006">
    <property type="entry name" value="ATP-dependent Clp protease proteolytic subunit"/>
    <property type="match status" value="1"/>
</dbReference>
<dbReference type="Gene3D" id="3.90.226.10">
    <property type="entry name" value="2-enoyl-CoA Hydratase, Chain A, domain 1"/>
    <property type="match status" value="1"/>
</dbReference>
<dbReference type="HAMAP" id="MF_00444">
    <property type="entry name" value="ClpP"/>
    <property type="match status" value="1"/>
</dbReference>
<dbReference type="InterPro" id="IPR001907">
    <property type="entry name" value="ClpP"/>
</dbReference>
<dbReference type="InterPro" id="IPR029045">
    <property type="entry name" value="ClpP/crotonase-like_dom_sf"/>
</dbReference>
<dbReference type="InterPro" id="IPR023562">
    <property type="entry name" value="ClpP/TepA"/>
</dbReference>
<dbReference type="InterPro" id="IPR033135">
    <property type="entry name" value="ClpP_His_AS"/>
</dbReference>
<dbReference type="InterPro" id="IPR018215">
    <property type="entry name" value="ClpP_Ser_AS"/>
</dbReference>
<dbReference type="PANTHER" id="PTHR10381">
    <property type="entry name" value="ATP-DEPENDENT CLP PROTEASE PROTEOLYTIC SUBUNIT"/>
    <property type="match status" value="1"/>
</dbReference>
<dbReference type="PANTHER" id="PTHR10381:SF15">
    <property type="entry name" value="CHLOROPLASTIC ATP-DEPENDENT CLP PROTEASE PROTEOLYTIC SUBUNIT 1"/>
    <property type="match status" value="1"/>
</dbReference>
<dbReference type="Pfam" id="PF00574">
    <property type="entry name" value="CLP_protease"/>
    <property type="match status" value="1"/>
</dbReference>
<dbReference type="PRINTS" id="PR00127">
    <property type="entry name" value="CLPPROTEASEP"/>
</dbReference>
<dbReference type="SUPFAM" id="SSF52096">
    <property type="entry name" value="ClpP/crotonase"/>
    <property type="match status" value="1"/>
</dbReference>
<dbReference type="PROSITE" id="PS00382">
    <property type="entry name" value="CLP_PROTEASE_HIS"/>
    <property type="match status" value="1"/>
</dbReference>
<dbReference type="PROSITE" id="PS00381">
    <property type="entry name" value="CLP_PROTEASE_SER"/>
    <property type="match status" value="1"/>
</dbReference>